<proteinExistence type="inferred from homology"/>
<protein>
    <recommendedName>
        <fullName evidence="1">Flagellar transcriptional regulator FlhD</fullName>
    </recommendedName>
</protein>
<dbReference type="EMBL" id="AJ012828">
    <property type="protein sequence ID" value="CAB41407.1"/>
    <property type="molecule type" value="Genomic_DNA"/>
</dbReference>
<dbReference type="RefSeq" id="WP_010847229.1">
    <property type="nucleotide sequence ID" value="NZ_WUUN01000068.1"/>
</dbReference>
<dbReference type="SMR" id="Q9X9F2"/>
<dbReference type="GeneID" id="97124279"/>
<dbReference type="OMA" id="REDKPMG"/>
<dbReference type="GO" id="GO:0005737">
    <property type="term" value="C:cytoplasm"/>
    <property type="evidence" value="ECO:0007669"/>
    <property type="project" value="UniProtKB-SubCell"/>
</dbReference>
<dbReference type="GO" id="GO:0003677">
    <property type="term" value="F:DNA binding"/>
    <property type="evidence" value="ECO:0007669"/>
    <property type="project" value="UniProtKB-UniRule"/>
</dbReference>
<dbReference type="GO" id="GO:0044780">
    <property type="term" value="P:bacterial-type flagellum assembly"/>
    <property type="evidence" value="ECO:0007669"/>
    <property type="project" value="InterPro"/>
</dbReference>
<dbReference type="GO" id="GO:0045893">
    <property type="term" value="P:positive regulation of DNA-templated transcription"/>
    <property type="evidence" value="ECO:0007669"/>
    <property type="project" value="InterPro"/>
</dbReference>
<dbReference type="GO" id="GO:1902208">
    <property type="term" value="P:regulation of bacterial-type flagellum assembly"/>
    <property type="evidence" value="ECO:0007669"/>
    <property type="project" value="UniProtKB-UniRule"/>
</dbReference>
<dbReference type="Gene3D" id="1.10.4000.10">
    <property type="entry name" value="Flagellar transcriptional activator FlhD"/>
    <property type="match status" value="1"/>
</dbReference>
<dbReference type="HAMAP" id="MF_00725">
    <property type="entry name" value="FlhD"/>
    <property type="match status" value="1"/>
</dbReference>
<dbReference type="InterPro" id="IPR023559">
    <property type="entry name" value="Flagellar_FlhD"/>
</dbReference>
<dbReference type="InterPro" id="IPR036194">
    <property type="entry name" value="FlhD_sf"/>
</dbReference>
<dbReference type="NCBIfam" id="NF002783">
    <property type="entry name" value="PRK02909.1-1"/>
    <property type="match status" value="1"/>
</dbReference>
<dbReference type="Pfam" id="PF05247">
    <property type="entry name" value="FlhD"/>
    <property type="match status" value="1"/>
</dbReference>
<dbReference type="SUPFAM" id="SSF63592">
    <property type="entry name" value="Flagellar transcriptional activator FlhD"/>
    <property type="match status" value="1"/>
</dbReference>
<reference key="1">
    <citation type="submission" date="1998-11" db="EMBL/GenBank/DDBJ databases">
        <title>flhDC gene disruptions leads to pleiotropic phenotypes.</title>
        <authorList>
            <person name="Givaudan A.G."/>
            <person name="Lanois A."/>
        </authorList>
    </citation>
    <scope>NUCLEOTIDE SEQUENCE [GENOMIC DNA]</scope>
    <source>
        <strain>F1</strain>
    </source>
</reference>
<gene>
    <name evidence="1" type="primary">flhD</name>
</gene>
<sequence length="116" mass="13303">MSTVELLKHIYDINLSYLLLAQRLINHEKASAMFRLGISESMADTLAELTLPQLVKLAETNQLICHFRFEDHETVQQLTKESRVDDLQQIHTGILLSTHLFQQLSAQDDTSIKKRA</sequence>
<organism>
    <name type="scientific">Xenorhabdus nematophila</name>
    <name type="common">Achromobacter nematophilus</name>
    <dbReference type="NCBI Taxonomy" id="628"/>
    <lineage>
        <taxon>Bacteria</taxon>
        <taxon>Pseudomonadati</taxon>
        <taxon>Pseudomonadota</taxon>
        <taxon>Gammaproteobacteria</taxon>
        <taxon>Enterobacterales</taxon>
        <taxon>Morganellaceae</taxon>
        <taxon>Xenorhabdus</taxon>
    </lineage>
</organism>
<feature type="chain" id="PRO_0000182728" description="Flagellar transcriptional regulator FlhD">
    <location>
        <begin position="1"/>
        <end position="116"/>
    </location>
</feature>
<feature type="disulfide bond" description="Interchain" evidence="1">
    <location>
        <position position="65"/>
    </location>
</feature>
<evidence type="ECO:0000255" key="1">
    <source>
        <dbReference type="HAMAP-Rule" id="MF_00725"/>
    </source>
</evidence>
<name>FLHD_XENNE</name>
<keyword id="KW-0010">Activator</keyword>
<keyword id="KW-1005">Bacterial flagellum biogenesis</keyword>
<keyword id="KW-0963">Cytoplasm</keyword>
<keyword id="KW-1015">Disulfide bond</keyword>
<keyword id="KW-0238">DNA-binding</keyword>
<keyword id="KW-0804">Transcription</keyword>
<keyword id="KW-0805">Transcription regulation</keyword>
<accession>Q9X9F2</accession>
<comment type="function">
    <text evidence="1">Functions in complex with FlhC as a master transcriptional regulator that regulates transcription of several flagellar and non-flagellar operons by binding to their promoter region. Activates expression of class 2 flagellar genes, including fliA, which is a flagellum-specific sigma factor that turns on the class 3 genes. Also regulates genes whose products function in a variety of physiological pathways.</text>
</comment>
<comment type="subunit">
    <text evidence="1">Homodimer; disulfide-linked. Forms a heterohexamer composed of two FlhC and four FlhD subunits. Each FlhC binds a FlhD dimer, forming a heterotrimer, and a hexamer assembles by dimerization of two heterotrimers.</text>
</comment>
<comment type="subcellular location">
    <subcellularLocation>
        <location evidence="1">Cytoplasm</location>
    </subcellularLocation>
</comment>
<comment type="domain">
    <text evidence="1">The C-terminal region contains a putative helix-turn-helix (HTH) motif, suggesting that this region may bind DNA.</text>
</comment>
<comment type="similarity">
    <text evidence="1">Belongs to the FlhD family.</text>
</comment>